<organism>
    <name type="scientific">Variola virus</name>
    <dbReference type="NCBI Taxonomy" id="10255"/>
    <lineage>
        <taxon>Viruses</taxon>
        <taxon>Varidnaviria</taxon>
        <taxon>Bamfordvirae</taxon>
        <taxon>Nucleocytoviricota</taxon>
        <taxon>Pokkesviricetes</taxon>
        <taxon>Chitovirales</taxon>
        <taxon>Poxviridae</taxon>
        <taxon>Chordopoxvirinae</taxon>
        <taxon>Orthopoxvirus</taxon>
    </lineage>
</organism>
<organismHost>
    <name type="scientific">Homo sapiens</name>
    <name type="common">Human</name>
    <dbReference type="NCBI Taxonomy" id="9606"/>
</organismHost>
<reference key="1">
    <citation type="journal article" date="1992" name="J. Virol.">
        <title>Independent evolution of monkeypox and variola viruses.</title>
        <authorList>
            <person name="Douglass N."/>
            <person name="Dumbell K."/>
        </authorList>
    </citation>
    <scope>NUCLEOTIDE SEQUENCE [GENOMIC DNA]</scope>
    <source>
        <strain>Harvey</strain>
        <strain>Somalia</strain>
    </source>
</reference>
<reference key="2">
    <citation type="journal article" date="1993" name="Nature">
        <title>Potential virulence determinants in terminal regions of variola smallpox virus genome.</title>
        <authorList>
            <person name="Massung R.F."/>
            <person name="Esposito J.J."/>
            <person name="Liu L.I."/>
            <person name="Qi J."/>
            <person name="Utterback T.R."/>
            <person name="Knight J.C."/>
            <person name="Aubin L."/>
            <person name="Yuran T.E."/>
            <person name="Parsons J.M."/>
            <person name="Loparev V.N."/>
            <person name="Selivanov N.A."/>
            <person name="Cavallaro K.F."/>
            <person name="Kerlavage A.R."/>
            <person name="Mahy B.W.J."/>
            <person name="Venter J.C."/>
        </authorList>
    </citation>
    <scope>NUCLEOTIDE SEQUENCE [GENOMIC DNA]</scope>
    <source>
        <strain>Bangladesh-1975</strain>
    </source>
</reference>
<name>PG067_VARV</name>
<keyword id="KW-0244">Early protein</keyword>
<keyword id="KW-1035">Host cytoplasm</keyword>
<keyword id="KW-1048">Host nucleus</keyword>
<keyword id="KW-0945">Host-virus interaction</keyword>
<keyword id="KW-1090">Inhibition of host innate immune response by virus</keyword>
<keyword id="KW-1113">Inhibition of host RLR pathway by virus</keyword>
<keyword id="KW-0472">Membrane</keyword>
<keyword id="KW-0677">Repeat</keyword>
<keyword id="KW-0812">Transmembrane</keyword>
<keyword id="KW-1133">Transmembrane helix</keyword>
<keyword id="KW-0899">Viral immunoevasion</keyword>
<feature type="chain" id="PRO_0000448179" description="Protein OPG067">
    <location>
        <begin position="1"/>
        <end position="341"/>
    </location>
</feature>
<feature type="transmembrane region" description="Helical" evidence="2">
    <location>
        <begin position="7"/>
        <end position="25"/>
    </location>
</feature>
<feature type="domain" description="BEN 1" evidence="3">
    <location>
        <begin position="112"/>
        <end position="222"/>
    </location>
</feature>
<feature type="domain" description="BEN 2" evidence="3">
    <location>
        <begin position="233"/>
        <end position="328"/>
    </location>
</feature>
<feature type="sequence variant" description="In strain: Harvey and Somalia." evidence="4">
    <original>A</original>
    <variation>V</variation>
    <location>
        <position position="209"/>
    </location>
</feature>
<accession>P0DSS4</accession>
<accession>Q01483</accession>
<protein>
    <recommendedName>
        <fullName>Protein OPG067</fullName>
    </recommendedName>
    <alternativeName>
        <fullName>Protein E5</fullName>
    </alternativeName>
</protein>
<dbReference type="EMBL" id="M95532">
    <property type="protein sequence ID" value="AAA48351.1"/>
    <property type="molecule type" value="Genomic_DNA"/>
</dbReference>
<dbReference type="EMBL" id="M95533">
    <property type="protein sequence ID" value="AAA48352.1"/>
    <property type="molecule type" value="Genomic_DNA"/>
</dbReference>
<dbReference type="EMBL" id="L22579">
    <property type="protein sequence ID" value="AAA60794.1"/>
    <property type="molecule type" value="Genomic_DNA"/>
</dbReference>
<dbReference type="PIR" id="T28484">
    <property type="entry name" value="T28484"/>
</dbReference>
<dbReference type="RefSeq" id="NP_042090.1">
    <property type="nucleotide sequence ID" value="NC_001611.1"/>
</dbReference>
<dbReference type="SMR" id="P0DSS4"/>
<dbReference type="GeneID" id="1486411"/>
<dbReference type="KEGG" id="vg:1486411"/>
<dbReference type="Proteomes" id="UP000119805">
    <property type="component" value="Segment"/>
</dbReference>
<dbReference type="GO" id="GO:0030430">
    <property type="term" value="C:host cell cytoplasm"/>
    <property type="evidence" value="ECO:0007669"/>
    <property type="project" value="UniProtKB-SubCell"/>
</dbReference>
<dbReference type="GO" id="GO:0042025">
    <property type="term" value="C:host cell nucleus"/>
    <property type="evidence" value="ECO:0007669"/>
    <property type="project" value="UniProtKB-SubCell"/>
</dbReference>
<dbReference type="GO" id="GO:0016020">
    <property type="term" value="C:membrane"/>
    <property type="evidence" value="ECO:0007669"/>
    <property type="project" value="UniProtKB-SubCell"/>
</dbReference>
<dbReference type="GO" id="GO:0003677">
    <property type="term" value="F:DNA binding"/>
    <property type="evidence" value="ECO:0007669"/>
    <property type="project" value="InterPro"/>
</dbReference>
<dbReference type="GO" id="GO:0052170">
    <property type="term" value="P:symbiont-mediated suppression of host innate immune response"/>
    <property type="evidence" value="ECO:0007669"/>
    <property type="project" value="UniProtKB-KW"/>
</dbReference>
<dbReference type="InterPro" id="IPR018379">
    <property type="entry name" value="BEN_domain"/>
</dbReference>
<dbReference type="InterPro" id="IPR004334">
    <property type="entry name" value="Poxvirus_E5R"/>
</dbReference>
<dbReference type="Pfam" id="PF10523">
    <property type="entry name" value="BEN"/>
    <property type="match status" value="2"/>
</dbReference>
<dbReference type="PIRSF" id="PIRSF015691">
    <property type="entry name" value="VAC_E5R"/>
    <property type="match status" value="1"/>
</dbReference>
<dbReference type="PROSITE" id="PS51457">
    <property type="entry name" value="BEN"/>
    <property type="match status" value="2"/>
</dbReference>
<evidence type="ECO:0000250" key="1">
    <source>
        <dbReference type="UniProtKB" id="P21606"/>
    </source>
</evidence>
<evidence type="ECO:0000255" key="2"/>
<evidence type="ECO:0000255" key="3">
    <source>
        <dbReference type="PROSITE-ProRule" id="PRU00784"/>
    </source>
</evidence>
<evidence type="ECO:0000305" key="4"/>
<proteinExistence type="evidence at transcript level"/>
<gene>
    <name type="primary">OPG067</name>
    <name type="ORF">E5R</name>
</gene>
<comment type="function">
    <text evidence="1">Major early protein present in virus factories. The presence of BEN domains suggests a possible role in organization of viral DNA during replication or transcription. Plays an essential role in the inhibition of the cGAS-dependent type I IFN induction in host dendritic cells. Mechanistically, abolishes cGAMP production by triggering host CGAS degradation via a proteasome-dependent mechanism.</text>
</comment>
<comment type="subunit">
    <text evidence="1">Interacts with host CGAS; this interaction inhibits CGAS-mediated type I interferon response.</text>
</comment>
<comment type="subcellular location">
    <subcellularLocation>
        <location evidence="1">Host cytoplasm</location>
    </subcellularLocation>
    <subcellularLocation>
        <location evidence="1">Host nucleus</location>
    </subcellularLocation>
    <subcellularLocation>
        <location evidence="2">Membrane</location>
        <topology evidence="2">Single-pass membrane protein</topology>
    </subcellularLocation>
    <text evidence="1">Localizes in cytoplasmic virus factories.</text>
</comment>
<comment type="induction">
    <text>Expressed in the early phase of the viral replicative cycle.</text>
</comment>
<comment type="similarity">
    <text evidence="4">Belongs to the orthopoxvirus OPG067 family.</text>
</comment>
<sequence>MLILTKVNIYMLIIVLWLYGYNFIMSGSQCPMINDDRFTLKRKYQIDSVESTMKMDKKRTKFQNRAKMVKEINQTIRAAQTHYETLKLGYIKFKKMIRTTTLEDITTSIPNIQKIYKLFSDISAIGKVSQNPSKMAYALLLYMFPNLFGDDHRFILYRMFPMSKIKHKIFSPFKLNLIRILVEERFYNNECRSNKWRIIGTQVDKMLIAESDKYTIDARYRLRPIYRIKGKSEEDTLFIKQMVDQCVTSQELVEKVLKILFRDLFKSGEYKAYRYDDDVENGFIGLDKLKLNIVHDIVEPCMPVRRPVAKILCKEMVNKYFENPLHIIGKNLQECIDFVSE</sequence>